<proteinExistence type="inferred from homology"/>
<protein>
    <recommendedName>
        <fullName evidence="1">Ribosomal RNA small subunit methyltransferase G</fullName>
        <ecNumber evidence="1">2.1.1.170</ecNumber>
    </recommendedName>
    <alternativeName>
        <fullName evidence="1">16S rRNA 7-methylguanosine methyltransferase</fullName>
        <shortName evidence="1">16S rRNA m7G methyltransferase</shortName>
    </alternativeName>
</protein>
<organism>
    <name type="scientific">Xylella fastidiosa (strain Temecula1 / ATCC 700964)</name>
    <dbReference type="NCBI Taxonomy" id="183190"/>
    <lineage>
        <taxon>Bacteria</taxon>
        <taxon>Pseudomonadati</taxon>
        <taxon>Pseudomonadota</taxon>
        <taxon>Gammaproteobacteria</taxon>
        <taxon>Lysobacterales</taxon>
        <taxon>Lysobacteraceae</taxon>
        <taxon>Xylella</taxon>
    </lineage>
</organism>
<name>RSMG_XYLFT</name>
<sequence length="212" mass="23468">MNDSSLSPEVTADLEYGLDILELDRAYVVPLLAYLTLLIRWNRTYNLTAIRDPREMVVRHLLDSLAIQRYVTVGRLADLGSGPGLPGIPLAISCPSLQVTLVESNGKKARFLREVVRQLGLSNVGVSEVRAEALDEALMYEHLTARALDTLNGIVTVGGHLLKSEGTLLAMKGAYPHEEIAMLPPHWVVEAVHRLQVPKLTGERHLVIVRKR</sequence>
<dbReference type="EC" id="2.1.1.170" evidence="1"/>
<dbReference type="EMBL" id="AE009442">
    <property type="protein sequence ID" value="AAO28730.1"/>
    <property type="molecule type" value="Genomic_DNA"/>
</dbReference>
<dbReference type="RefSeq" id="WP_004572865.1">
    <property type="nucleotide sequence ID" value="NC_004556.1"/>
</dbReference>
<dbReference type="SMR" id="Q87D24"/>
<dbReference type="GeneID" id="93904648"/>
<dbReference type="KEGG" id="xft:PD_0862"/>
<dbReference type="HOGENOM" id="CLU_065341_2_0_6"/>
<dbReference type="Proteomes" id="UP000002516">
    <property type="component" value="Chromosome"/>
</dbReference>
<dbReference type="GO" id="GO:0005829">
    <property type="term" value="C:cytosol"/>
    <property type="evidence" value="ECO:0007669"/>
    <property type="project" value="TreeGrafter"/>
</dbReference>
<dbReference type="GO" id="GO:0070043">
    <property type="term" value="F:rRNA (guanine-N7-)-methyltransferase activity"/>
    <property type="evidence" value="ECO:0007669"/>
    <property type="project" value="UniProtKB-UniRule"/>
</dbReference>
<dbReference type="Gene3D" id="3.40.50.150">
    <property type="entry name" value="Vaccinia Virus protein VP39"/>
    <property type="match status" value="1"/>
</dbReference>
<dbReference type="HAMAP" id="MF_00074">
    <property type="entry name" value="16SrRNA_methyltr_G"/>
    <property type="match status" value="1"/>
</dbReference>
<dbReference type="InterPro" id="IPR003682">
    <property type="entry name" value="rRNA_ssu_MeTfrase_G"/>
</dbReference>
<dbReference type="InterPro" id="IPR029063">
    <property type="entry name" value="SAM-dependent_MTases_sf"/>
</dbReference>
<dbReference type="NCBIfam" id="TIGR00138">
    <property type="entry name" value="rsmG_gidB"/>
    <property type="match status" value="1"/>
</dbReference>
<dbReference type="PANTHER" id="PTHR31760">
    <property type="entry name" value="S-ADENOSYL-L-METHIONINE-DEPENDENT METHYLTRANSFERASES SUPERFAMILY PROTEIN"/>
    <property type="match status" value="1"/>
</dbReference>
<dbReference type="PANTHER" id="PTHR31760:SF0">
    <property type="entry name" value="S-ADENOSYL-L-METHIONINE-DEPENDENT METHYLTRANSFERASES SUPERFAMILY PROTEIN"/>
    <property type="match status" value="1"/>
</dbReference>
<dbReference type="Pfam" id="PF02527">
    <property type="entry name" value="GidB"/>
    <property type="match status" value="1"/>
</dbReference>
<dbReference type="PIRSF" id="PIRSF003078">
    <property type="entry name" value="GidB"/>
    <property type="match status" value="1"/>
</dbReference>
<dbReference type="SUPFAM" id="SSF53335">
    <property type="entry name" value="S-adenosyl-L-methionine-dependent methyltransferases"/>
    <property type="match status" value="1"/>
</dbReference>
<accession>Q87D24</accession>
<keyword id="KW-0963">Cytoplasm</keyword>
<keyword id="KW-0489">Methyltransferase</keyword>
<keyword id="KW-1185">Reference proteome</keyword>
<keyword id="KW-0698">rRNA processing</keyword>
<keyword id="KW-0949">S-adenosyl-L-methionine</keyword>
<keyword id="KW-0808">Transferase</keyword>
<feature type="chain" id="PRO_0000184372" description="Ribosomal RNA small subunit methyltransferase G">
    <location>
        <begin position="1"/>
        <end position="212"/>
    </location>
</feature>
<feature type="binding site" evidence="1">
    <location>
        <position position="80"/>
    </location>
    <ligand>
        <name>S-adenosyl-L-methionine</name>
        <dbReference type="ChEBI" id="CHEBI:59789"/>
    </ligand>
</feature>
<feature type="binding site" evidence="1">
    <location>
        <position position="85"/>
    </location>
    <ligand>
        <name>S-adenosyl-L-methionine</name>
        <dbReference type="ChEBI" id="CHEBI:59789"/>
    </ligand>
</feature>
<feature type="binding site" evidence="1">
    <location>
        <begin position="131"/>
        <end position="132"/>
    </location>
    <ligand>
        <name>S-adenosyl-L-methionine</name>
        <dbReference type="ChEBI" id="CHEBI:59789"/>
    </ligand>
</feature>
<feature type="binding site" evidence="1">
    <location>
        <position position="146"/>
    </location>
    <ligand>
        <name>S-adenosyl-L-methionine</name>
        <dbReference type="ChEBI" id="CHEBI:59789"/>
    </ligand>
</feature>
<reference key="1">
    <citation type="journal article" date="2003" name="J. Bacteriol.">
        <title>Comparative analyses of the complete genome sequences of Pierce's disease and citrus variegated chlorosis strains of Xylella fastidiosa.</title>
        <authorList>
            <person name="Van Sluys M.A."/>
            <person name="de Oliveira M.C."/>
            <person name="Monteiro-Vitorello C.B."/>
            <person name="Miyaki C.Y."/>
            <person name="Furlan L.R."/>
            <person name="Camargo L.E.A."/>
            <person name="da Silva A.C.R."/>
            <person name="Moon D.H."/>
            <person name="Takita M.A."/>
            <person name="Lemos E.G.M."/>
            <person name="Machado M.A."/>
            <person name="Ferro M.I.T."/>
            <person name="da Silva F.R."/>
            <person name="Goldman M.H.S."/>
            <person name="Goldman G.H."/>
            <person name="Lemos M.V.F."/>
            <person name="El-Dorry H."/>
            <person name="Tsai S.M."/>
            <person name="Carrer H."/>
            <person name="Carraro D.M."/>
            <person name="de Oliveira R.C."/>
            <person name="Nunes L.R."/>
            <person name="Siqueira W.J."/>
            <person name="Coutinho L.L."/>
            <person name="Kimura E.T."/>
            <person name="Ferro E.S."/>
            <person name="Harakava R."/>
            <person name="Kuramae E.E."/>
            <person name="Marino C.L."/>
            <person name="Giglioti E."/>
            <person name="Abreu I.L."/>
            <person name="Alves L.M.C."/>
            <person name="do Amaral A.M."/>
            <person name="Baia G.S."/>
            <person name="Blanco S.R."/>
            <person name="Brito M.S."/>
            <person name="Cannavan F.S."/>
            <person name="Celestino A.V."/>
            <person name="da Cunha A.F."/>
            <person name="Fenille R.C."/>
            <person name="Ferro J.A."/>
            <person name="Formighieri E.F."/>
            <person name="Kishi L.T."/>
            <person name="Leoni S.G."/>
            <person name="Oliveira A.R."/>
            <person name="Rosa V.E. Jr."/>
            <person name="Sassaki F.T."/>
            <person name="Sena J.A.D."/>
            <person name="de Souza A.A."/>
            <person name="Truffi D."/>
            <person name="Tsukumo F."/>
            <person name="Yanai G.M."/>
            <person name="Zaros L.G."/>
            <person name="Civerolo E.L."/>
            <person name="Simpson A.J.G."/>
            <person name="Almeida N.F. Jr."/>
            <person name="Setubal J.C."/>
            <person name="Kitajima J.P."/>
        </authorList>
    </citation>
    <scope>NUCLEOTIDE SEQUENCE [LARGE SCALE GENOMIC DNA]</scope>
    <source>
        <strain>Temecula1 / ATCC 700964</strain>
    </source>
</reference>
<comment type="function">
    <text evidence="1">Specifically methylates the N7 position of guanine in position 527 of 16S rRNA.</text>
</comment>
<comment type="catalytic activity">
    <reaction evidence="1">
        <text>guanosine(527) in 16S rRNA + S-adenosyl-L-methionine = N(7)-methylguanosine(527) in 16S rRNA + S-adenosyl-L-homocysteine</text>
        <dbReference type="Rhea" id="RHEA:42732"/>
        <dbReference type="Rhea" id="RHEA-COMP:10209"/>
        <dbReference type="Rhea" id="RHEA-COMP:10210"/>
        <dbReference type="ChEBI" id="CHEBI:57856"/>
        <dbReference type="ChEBI" id="CHEBI:59789"/>
        <dbReference type="ChEBI" id="CHEBI:74269"/>
        <dbReference type="ChEBI" id="CHEBI:74480"/>
        <dbReference type="EC" id="2.1.1.170"/>
    </reaction>
</comment>
<comment type="subcellular location">
    <subcellularLocation>
        <location evidence="1">Cytoplasm</location>
    </subcellularLocation>
</comment>
<comment type="similarity">
    <text evidence="1">Belongs to the methyltransferase superfamily. RNA methyltransferase RsmG family.</text>
</comment>
<gene>
    <name evidence="1" type="primary">rsmG</name>
    <name type="ordered locus">PD_0862</name>
</gene>
<evidence type="ECO:0000255" key="1">
    <source>
        <dbReference type="HAMAP-Rule" id="MF_00074"/>
    </source>
</evidence>